<gene>
    <name evidence="4" type="primary">2ODD11</name>
    <name evidence="9" type="ordered locus">Os10g0558700</name>
    <name evidence="8" type="ordered locus">LOC_Os10g40934</name>
    <name evidence="10" type="ORF">OsJ_32437</name>
    <name evidence="6" type="ORF">OSJNBa0010C11.19</name>
    <name evidence="7" type="ORF">OSJNBa0042H09.28</name>
</gene>
<feature type="chain" id="PRO_0000449518" description="2-oxoglutarate-dependent dioxygenase 11">
    <location>
        <begin position="1"/>
        <end position="357"/>
    </location>
</feature>
<feature type="domain" description="Fe2OG dioxygenase" evidence="1">
    <location>
        <begin position="207"/>
        <end position="307"/>
    </location>
</feature>
<feature type="binding site" evidence="1">
    <location>
        <position position="231"/>
    </location>
    <ligand>
        <name>Fe cation</name>
        <dbReference type="ChEBI" id="CHEBI:24875"/>
    </ligand>
</feature>
<feature type="binding site" evidence="1">
    <location>
        <position position="233"/>
    </location>
    <ligand>
        <name>Fe cation</name>
        <dbReference type="ChEBI" id="CHEBI:24875"/>
    </ligand>
</feature>
<feature type="binding site" evidence="1">
    <location>
        <position position="288"/>
    </location>
    <ligand>
        <name>Fe cation</name>
        <dbReference type="ChEBI" id="CHEBI:24875"/>
    </ligand>
</feature>
<feature type="binding site" evidence="1">
    <location>
        <position position="298"/>
    </location>
    <ligand>
        <name>2-oxoglutarate</name>
        <dbReference type="ChEBI" id="CHEBI:16810"/>
    </ligand>
</feature>
<sequence>MAGARSVGSLPVPNVQALAEICNDPDEHIPERYIRPEASSEEVINNYQGDMAIPIIDLKKLLCPQSSEEECVKLRSACQYWGFFLLINHGVPDEVIANLKRDIVDFFSQPLDTKKEYTQLPNSLEGYGQSFVFSEDQKLDWADMLYLHVHPSDSRDLRFWPTSPASFRQSIDAYSSETKSLALCLFEFMAKAVGAKPESLLDLFEEQPRGLRMAYYPPCRQADKVMGLSPHSDAGGLTLLLEINNVQGLQIKKDGKWFSIDAPNGALIANIGDTLEILSNGKFRSVEHRAVINPNKERISAALFHYPSENMVISPLPEFVKDGKVKYRSISYLDFMKQIFTQQLDGKNRVEVLKLDQ</sequence>
<protein>
    <recommendedName>
        <fullName evidence="4">2-oxoglutarate-dependent dioxygenase 11</fullName>
        <ecNumber evidence="1 2">1.14.11.-</ecNumber>
    </recommendedName>
    <alternativeName>
        <fullName evidence="4">Melatonin 2-hydroxylase</fullName>
    </alternativeName>
</protein>
<dbReference type="EC" id="1.14.11.-" evidence="1 2"/>
<dbReference type="EMBL" id="AC069300">
    <property type="protein sequence ID" value="AAK55454.1"/>
    <property type="molecule type" value="Genomic_DNA"/>
</dbReference>
<dbReference type="EMBL" id="AC079874">
    <property type="protein sequence ID" value="AAL79801.1"/>
    <property type="molecule type" value="Genomic_DNA"/>
</dbReference>
<dbReference type="EMBL" id="DP000086">
    <property type="protein sequence ID" value="AAP54990.1"/>
    <property type="molecule type" value="Genomic_DNA"/>
</dbReference>
<dbReference type="EMBL" id="DP000086">
    <property type="protein sequence ID" value="ABG66251.1"/>
    <property type="molecule type" value="Genomic_DNA"/>
</dbReference>
<dbReference type="EMBL" id="DP000086">
    <property type="protein sequence ID" value="ABG66253.1"/>
    <property type="molecule type" value="Genomic_DNA"/>
</dbReference>
<dbReference type="EMBL" id="AP008216">
    <property type="protein sequence ID" value="BAF27202.1"/>
    <property type="molecule type" value="Genomic_DNA"/>
</dbReference>
<dbReference type="EMBL" id="AP014966">
    <property type="protein sequence ID" value="BAT12021.1"/>
    <property type="molecule type" value="Genomic_DNA"/>
</dbReference>
<dbReference type="EMBL" id="CM000147">
    <property type="protein sequence ID" value="EAZ16953.1"/>
    <property type="molecule type" value="Genomic_DNA"/>
</dbReference>
<dbReference type="EMBL" id="AK067086">
    <property type="protein sequence ID" value="BAG90259.1"/>
    <property type="molecule type" value="mRNA"/>
</dbReference>
<dbReference type="RefSeq" id="XP_015614185.1">
    <property type="nucleotide sequence ID" value="XM_015758699.1"/>
</dbReference>
<dbReference type="SMR" id="Q94LP4"/>
<dbReference type="FunCoup" id="Q94LP4">
    <property type="interactions" value="61"/>
</dbReference>
<dbReference type="STRING" id="39947.Q94LP4"/>
<dbReference type="PaxDb" id="39947-Q94LP4"/>
<dbReference type="EnsemblPlants" id="Os10t0558700-02">
    <property type="protein sequence ID" value="Os10t0558700-02"/>
    <property type="gene ID" value="Os10g0558700"/>
</dbReference>
<dbReference type="Gramene" id="Os10t0558700-02">
    <property type="protein sequence ID" value="Os10t0558700-02"/>
    <property type="gene ID" value="Os10g0558700"/>
</dbReference>
<dbReference type="KEGG" id="dosa:Os10g0558700"/>
<dbReference type="KEGG" id="osa:112935986"/>
<dbReference type="eggNOG" id="KOG0143">
    <property type="taxonomic scope" value="Eukaryota"/>
</dbReference>
<dbReference type="InParanoid" id="Q94LP4"/>
<dbReference type="OMA" id="HYPCENI"/>
<dbReference type="OrthoDB" id="288590at2759"/>
<dbReference type="Proteomes" id="UP000000763">
    <property type="component" value="Chromosome 10"/>
</dbReference>
<dbReference type="Proteomes" id="UP000007752">
    <property type="component" value="Chromosome 10"/>
</dbReference>
<dbReference type="Proteomes" id="UP000059680">
    <property type="component" value="Chromosome 10"/>
</dbReference>
<dbReference type="ExpressionAtlas" id="Q94LP4">
    <property type="expression patterns" value="baseline and differential"/>
</dbReference>
<dbReference type="GO" id="GO:0005737">
    <property type="term" value="C:cytoplasm"/>
    <property type="evidence" value="ECO:0007669"/>
    <property type="project" value="UniProtKB-SubCell"/>
</dbReference>
<dbReference type="GO" id="GO:0051213">
    <property type="term" value="F:dioxygenase activity"/>
    <property type="evidence" value="ECO:0007669"/>
    <property type="project" value="UniProtKB-KW"/>
</dbReference>
<dbReference type="GO" id="GO:0031418">
    <property type="term" value="F:L-ascorbic acid binding"/>
    <property type="evidence" value="ECO:0007669"/>
    <property type="project" value="UniProtKB-KW"/>
</dbReference>
<dbReference type="GO" id="GO:0046872">
    <property type="term" value="F:metal ion binding"/>
    <property type="evidence" value="ECO:0007669"/>
    <property type="project" value="UniProtKB-KW"/>
</dbReference>
<dbReference type="FunFam" id="2.60.120.330:FF:000001">
    <property type="entry name" value="Protein SRG1"/>
    <property type="match status" value="1"/>
</dbReference>
<dbReference type="Gene3D" id="2.60.120.330">
    <property type="entry name" value="B-lactam Antibiotic, Isopenicillin N Synthase, Chain"/>
    <property type="match status" value="1"/>
</dbReference>
<dbReference type="InterPro" id="IPR026992">
    <property type="entry name" value="DIOX_N"/>
</dbReference>
<dbReference type="InterPro" id="IPR044861">
    <property type="entry name" value="IPNS-like_FE2OG_OXY"/>
</dbReference>
<dbReference type="InterPro" id="IPR027443">
    <property type="entry name" value="IPNS-like_sf"/>
</dbReference>
<dbReference type="InterPro" id="IPR005123">
    <property type="entry name" value="Oxoglu/Fe-dep_dioxygenase_dom"/>
</dbReference>
<dbReference type="InterPro" id="IPR050295">
    <property type="entry name" value="Plant_2OG-oxidoreductases"/>
</dbReference>
<dbReference type="PANTHER" id="PTHR47991">
    <property type="entry name" value="OXOGLUTARATE/IRON-DEPENDENT DIOXYGENASE"/>
    <property type="match status" value="1"/>
</dbReference>
<dbReference type="Pfam" id="PF03171">
    <property type="entry name" value="2OG-FeII_Oxy"/>
    <property type="match status" value="1"/>
</dbReference>
<dbReference type="Pfam" id="PF14226">
    <property type="entry name" value="DIOX_N"/>
    <property type="match status" value="1"/>
</dbReference>
<dbReference type="SUPFAM" id="SSF51197">
    <property type="entry name" value="Clavaminate synthase-like"/>
    <property type="match status" value="1"/>
</dbReference>
<dbReference type="PROSITE" id="PS51471">
    <property type="entry name" value="FE2OG_OXY"/>
    <property type="match status" value="1"/>
</dbReference>
<reference key="1">
    <citation type="journal article" date="2003" name="Science">
        <title>In-depth view of structure, activity, and evolution of rice chromosome 10.</title>
        <authorList>
            <person name="Yu Y."/>
            <person name="Rambo T."/>
            <person name="Currie J."/>
            <person name="Saski C."/>
            <person name="Kim H.-R."/>
            <person name="Collura K."/>
            <person name="Thompson S."/>
            <person name="Simmons J."/>
            <person name="Yang T.-J."/>
            <person name="Nah G."/>
            <person name="Patel A.J."/>
            <person name="Thurmond S."/>
            <person name="Henry D."/>
            <person name="Oates R."/>
            <person name="Palmer M."/>
            <person name="Pries G."/>
            <person name="Gibson J."/>
            <person name="Anderson H."/>
            <person name="Paradkar M."/>
            <person name="Crane L."/>
            <person name="Dale J."/>
            <person name="Carver M.B."/>
            <person name="Wood T."/>
            <person name="Frisch D."/>
            <person name="Engler F."/>
            <person name="Soderlund C."/>
            <person name="Palmer L.E."/>
            <person name="Teytelman L."/>
            <person name="Nascimento L."/>
            <person name="De la Bastide M."/>
            <person name="Spiegel L."/>
            <person name="Ware D."/>
            <person name="O'Shaughnessy A."/>
            <person name="Dike S."/>
            <person name="Dedhia N."/>
            <person name="Preston R."/>
            <person name="Huang E."/>
            <person name="Ferraro K."/>
            <person name="Kuit K."/>
            <person name="Miller B."/>
            <person name="Zutavern T."/>
            <person name="Katzenberger F."/>
            <person name="Muller S."/>
            <person name="Balija V."/>
            <person name="Martienssen R.A."/>
            <person name="Stein L."/>
            <person name="Minx P."/>
            <person name="Johnson D."/>
            <person name="Cordum H."/>
            <person name="Mardis E."/>
            <person name="Cheng Z."/>
            <person name="Jiang J."/>
            <person name="Wilson R."/>
            <person name="McCombie W.R."/>
            <person name="Wing R.A."/>
            <person name="Yuan Q."/>
            <person name="Ouyang S."/>
            <person name="Liu J."/>
            <person name="Jones K.M."/>
            <person name="Gansberger K."/>
            <person name="Moffat K."/>
            <person name="Hill J."/>
            <person name="Tsitrin T."/>
            <person name="Overton L."/>
            <person name="Bera J."/>
            <person name="Kim M."/>
            <person name="Jin S."/>
            <person name="Tallon L."/>
            <person name="Ciecko A."/>
            <person name="Pai G."/>
            <person name="Van Aken S."/>
            <person name="Utterback T."/>
            <person name="Reidmuller S."/>
            <person name="Bormann J."/>
            <person name="Feldblyum T."/>
            <person name="Hsiao J."/>
            <person name="Zismann V."/>
            <person name="Blunt S."/>
            <person name="de Vazeille A.R."/>
            <person name="Shaffer T."/>
            <person name="Koo H."/>
            <person name="Suh B."/>
            <person name="Yang Q."/>
            <person name="Haas B."/>
            <person name="Peterson J."/>
            <person name="Pertea M."/>
            <person name="Volfovsky N."/>
            <person name="Wortman J."/>
            <person name="White O."/>
            <person name="Salzberg S.L."/>
            <person name="Fraser C.M."/>
            <person name="Buell C.R."/>
            <person name="Messing J."/>
            <person name="Song R."/>
            <person name="Fuks G."/>
            <person name="Llaca V."/>
            <person name="Kovchak S."/>
            <person name="Young S."/>
            <person name="Bowers J.E."/>
            <person name="Paterson A.H."/>
            <person name="Johns M.A."/>
            <person name="Mao L."/>
            <person name="Pan H."/>
            <person name="Dean R.A."/>
        </authorList>
    </citation>
    <scope>NUCLEOTIDE SEQUENCE [LARGE SCALE GENOMIC DNA]</scope>
    <source>
        <strain>cv. Nipponbare</strain>
    </source>
</reference>
<reference key="2">
    <citation type="journal article" date="2005" name="Nature">
        <title>The map-based sequence of the rice genome.</title>
        <authorList>
            <consortium name="International rice genome sequencing project (IRGSP)"/>
        </authorList>
    </citation>
    <scope>NUCLEOTIDE SEQUENCE [LARGE SCALE GENOMIC DNA]</scope>
    <source>
        <strain>cv. Nipponbare</strain>
    </source>
</reference>
<reference key="3">
    <citation type="journal article" date="2008" name="Nucleic Acids Res.">
        <title>The rice annotation project database (RAP-DB): 2008 update.</title>
        <authorList>
            <consortium name="The rice annotation project (RAP)"/>
        </authorList>
    </citation>
    <scope>GENOME REANNOTATION</scope>
    <source>
        <strain>cv. Nipponbare</strain>
    </source>
</reference>
<reference key="4">
    <citation type="journal article" date="2013" name="Rice">
        <title>Improvement of the Oryza sativa Nipponbare reference genome using next generation sequence and optical map data.</title>
        <authorList>
            <person name="Kawahara Y."/>
            <person name="de la Bastide M."/>
            <person name="Hamilton J.P."/>
            <person name="Kanamori H."/>
            <person name="McCombie W.R."/>
            <person name="Ouyang S."/>
            <person name="Schwartz D.C."/>
            <person name="Tanaka T."/>
            <person name="Wu J."/>
            <person name="Zhou S."/>
            <person name="Childs K.L."/>
            <person name="Davidson R.M."/>
            <person name="Lin H."/>
            <person name="Quesada-Ocampo L."/>
            <person name="Vaillancourt B."/>
            <person name="Sakai H."/>
            <person name="Lee S.S."/>
            <person name="Kim J."/>
            <person name="Numa H."/>
            <person name="Itoh T."/>
            <person name="Buell C.R."/>
            <person name="Matsumoto T."/>
        </authorList>
    </citation>
    <scope>GENOME REANNOTATION</scope>
    <source>
        <strain>cv. Nipponbare</strain>
    </source>
</reference>
<reference key="5">
    <citation type="journal article" date="2005" name="PLoS Biol.">
        <title>The genomes of Oryza sativa: a history of duplications.</title>
        <authorList>
            <person name="Yu J."/>
            <person name="Wang J."/>
            <person name="Lin W."/>
            <person name="Li S."/>
            <person name="Li H."/>
            <person name="Zhou J."/>
            <person name="Ni P."/>
            <person name="Dong W."/>
            <person name="Hu S."/>
            <person name="Zeng C."/>
            <person name="Zhang J."/>
            <person name="Zhang Y."/>
            <person name="Li R."/>
            <person name="Xu Z."/>
            <person name="Li S."/>
            <person name="Li X."/>
            <person name="Zheng H."/>
            <person name="Cong L."/>
            <person name="Lin L."/>
            <person name="Yin J."/>
            <person name="Geng J."/>
            <person name="Li G."/>
            <person name="Shi J."/>
            <person name="Liu J."/>
            <person name="Lv H."/>
            <person name="Li J."/>
            <person name="Wang J."/>
            <person name="Deng Y."/>
            <person name="Ran L."/>
            <person name="Shi X."/>
            <person name="Wang X."/>
            <person name="Wu Q."/>
            <person name="Li C."/>
            <person name="Ren X."/>
            <person name="Wang J."/>
            <person name="Wang X."/>
            <person name="Li D."/>
            <person name="Liu D."/>
            <person name="Zhang X."/>
            <person name="Ji Z."/>
            <person name="Zhao W."/>
            <person name="Sun Y."/>
            <person name="Zhang Z."/>
            <person name="Bao J."/>
            <person name="Han Y."/>
            <person name="Dong L."/>
            <person name="Ji J."/>
            <person name="Chen P."/>
            <person name="Wu S."/>
            <person name="Liu J."/>
            <person name="Xiao Y."/>
            <person name="Bu D."/>
            <person name="Tan J."/>
            <person name="Yang L."/>
            <person name="Ye C."/>
            <person name="Zhang J."/>
            <person name="Xu J."/>
            <person name="Zhou Y."/>
            <person name="Yu Y."/>
            <person name="Zhang B."/>
            <person name="Zhuang S."/>
            <person name="Wei H."/>
            <person name="Liu B."/>
            <person name="Lei M."/>
            <person name="Yu H."/>
            <person name="Li Y."/>
            <person name="Xu H."/>
            <person name="Wei S."/>
            <person name="He X."/>
            <person name="Fang L."/>
            <person name="Zhang Z."/>
            <person name="Zhang Y."/>
            <person name="Huang X."/>
            <person name="Su Z."/>
            <person name="Tong W."/>
            <person name="Li J."/>
            <person name="Tong Z."/>
            <person name="Li S."/>
            <person name="Ye J."/>
            <person name="Wang L."/>
            <person name="Fang L."/>
            <person name="Lei T."/>
            <person name="Chen C.-S."/>
            <person name="Chen H.-C."/>
            <person name="Xu Z."/>
            <person name="Li H."/>
            <person name="Huang H."/>
            <person name="Zhang F."/>
            <person name="Xu H."/>
            <person name="Li N."/>
            <person name="Zhao C."/>
            <person name="Li S."/>
            <person name="Dong L."/>
            <person name="Huang Y."/>
            <person name="Li L."/>
            <person name="Xi Y."/>
            <person name="Qi Q."/>
            <person name="Li W."/>
            <person name="Zhang B."/>
            <person name="Hu W."/>
            <person name="Zhang Y."/>
            <person name="Tian X."/>
            <person name="Jiao Y."/>
            <person name="Liang X."/>
            <person name="Jin J."/>
            <person name="Gao L."/>
            <person name="Zheng W."/>
            <person name="Hao B."/>
            <person name="Liu S.-M."/>
            <person name="Wang W."/>
            <person name="Yuan L."/>
            <person name="Cao M."/>
            <person name="McDermott J."/>
            <person name="Samudrala R."/>
            <person name="Wang J."/>
            <person name="Wong G.K.-S."/>
            <person name="Yang H."/>
        </authorList>
    </citation>
    <scope>NUCLEOTIDE SEQUENCE [LARGE SCALE GENOMIC DNA]</scope>
    <source>
        <strain>cv. Nipponbare</strain>
    </source>
</reference>
<reference key="6">
    <citation type="journal article" date="2003" name="Science">
        <title>Collection, mapping, and annotation of over 28,000 cDNA clones from japonica rice.</title>
        <authorList>
            <consortium name="The rice full-length cDNA consortium"/>
        </authorList>
    </citation>
    <scope>NUCLEOTIDE SEQUENCE [LARGE SCALE MRNA]</scope>
    <source>
        <strain>cv. Nipponbare</strain>
    </source>
</reference>
<reference key="7">
    <citation type="journal article" date="2015" name="J. Pineal Res.">
        <title>Molecular cloning of melatonin 2-hydroxylase responsible for 2-hydroxymelatonin production in rice (Oryza sativa).</title>
        <authorList>
            <person name="Byeon Y."/>
            <person name="Back K."/>
        </authorList>
    </citation>
    <scope>FUNCTION</scope>
    <scope>CATALYTIC ACTIVITY</scope>
    <scope>COFACTOR</scope>
    <scope>BIOPHYSICOCHEMICAL PROPERTIES</scope>
    <scope>TISSUE SPECIFICITY</scope>
</reference>
<reference key="8">
    <citation type="journal article" date="2015" name="J. Pineal Res.">
        <title>Coordinated regulation of melatonin synthesis and degradation genes in rice leaves in response to cadmium treatment.</title>
        <authorList>
            <person name="Byeon Y."/>
            <person name="Lee H.Y."/>
            <person name="Hwang O.J."/>
            <person name="Lee H.J."/>
            <person name="Lee K."/>
            <person name="Back K."/>
        </authorList>
    </citation>
    <scope>SUBCELLULAR LOCATION</scope>
    <scope>INDUCTION BY CADMIUM</scope>
</reference>
<evidence type="ECO:0000255" key="1">
    <source>
        <dbReference type="PROSITE-ProRule" id="PRU00805"/>
    </source>
</evidence>
<evidence type="ECO:0000269" key="2">
    <source>
    </source>
</evidence>
<evidence type="ECO:0000269" key="3">
    <source>
    </source>
</evidence>
<evidence type="ECO:0000303" key="4">
    <source>
    </source>
</evidence>
<evidence type="ECO:0000305" key="5"/>
<evidence type="ECO:0000312" key="6">
    <source>
        <dbReference type="EMBL" id="AAK55454.1"/>
    </source>
</evidence>
<evidence type="ECO:0000312" key="7">
    <source>
        <dbReference type="EMBL" id="AAL79801.1"/>
    </source>
</evidence>
<evidence type="ECO:0000312" key="8">
    <source>
        <dbReference type="EMBL" id="AAP54990.1"/>
    </source>
</evidence>
<evidence type="ECO:0000312" key="9">
    <source>
        <dbReference type="EMBL" id="BAF27202.1"/>
    </source>
</evidence>
<evidence type="ECO:0000312" key="10">
    <source>
        <dbReference type="EMBL" id="EAZ16953.1"/>
    </source>
</evidence>
<proteinExistence type="evidence at protein level"/>
<comment type="function">
    <text evidence="2">Involved in melatonin degradation (PubMed:25728912). Catalyzes the hydroxylation of melatonin to produce 2-hydroxymelatonin (PubMed:25728912).</text>
</comment>
<comment type="catalytic activity">
    <reaction evidence="2">
        <text>melatonin + 2-oxoglutarate + O2 = 2-hydroxymelatonin + succinate + CO2</text>
        <dbReference type="Rhea" id="RHEA:62512"/>
        <dbReference type="ChEBI" id="CHEBI:15379"/>
        <dbReference type="ChEBI" id="CHEBI:16526"/>
        <dbReference type="ChEBI" id="CHEBI:16796"/>
        <dbReference type="ChEBI" id="CHEBI:16810"/>
        <dbReference type="ChEBI" id="CHEBI:30031"/>
        <dbReference type="ChEBI" id="CHEBI:145792"/>
    </reaction>
    <physiologicalReaction direction="left-to-right" evidence="2">
        <dbReference type="Rhea" id="RHEA:62513"/>
    </physiologicalReaction>
</comment>
<comment type="cofactor">
    <cofactor evidence="1 2">
        <name>Fe(2+)</name>
        <dbReference type="ChEBI" id="CHEBI:29033"/>
    </cofactor>
    <text evidence="1">Binds 1 Fe(2+) ion per subunit.</text>
</comment>
<comment type="cofactor">
    <cofactor evidence="2">
        <name>L-ascorbate</name>
        <dbReference type="ChEBI" id="CHEBI:38290"/>
    </cofactor>
</comment>
<comment type="biophysicochemical properties">
    <kinetics>
        <KM evidence="2">371 uM for melatonin</KM>
        <Vmax evidence="2">7.1 pmol/sec/mg enzyme toward melatonine</Vmax>
    </kinetics>
    <phDependence>
        <text evidence="2">Optimum pH is 8.0.</text>
    </phDependence>
    <temperatureDependence>
        <text evidence="2">Optimum temperature is 30 degrees Celsius.</text>
    </temperatureDependence>
</comment>
<comment type="subcellular location">
    <subcellularLocation>
        <location evidence="3">Cytoplasm</location>
    </subcellularLocation>
</comment>
<comment type="tissue specificity">
    <text evidence="2">Expressed in shoots.</text>
</comment>
<comment type="similarity">
    <text evidence="5">Belongs to the iron/ascorbate-dependent oxidoreductase family.</text>
</comment>
<organism>
    <name type="scientific">Oryza sativa subsp. japonica</name>
    <name type="common">Rice</name>
    <dbReference type="NCBI Taxonomy" id="39947"/>
    <lineage>
        <taxon>Eukaryota</taxon>
        <taxon>Viridiplantae</taxon>
        <taxon>Streptophyta</taxon>
        <taxon>Embryophyta</taxon>
        <taxon>Tracheophyta</taxon>
        <taxon>Spermatophyta</taxon>
        <taxon>Magnoliopsida</taxon>
        <taxon>Liliopsida</taxon>
        <taxon>Poales</taxon>
        <taxon>Poaceae</taxon>
        <taxon>BOP clade</taxon>
        <taxon>Oryzoideae</taxon>
        <taxon>Oryzeae</taxon>
        <taxon>Oryzinae</taxon>
        <taxon>Oryza</taxon>
        <taxon>Oryza sativa</taxon>
    </lineage>
</organism>
<keyword id="KW-0963">Cytoplasm</keyword>
<keyword id="KW-0223">Dioxygenase</keyword>
<keyword id="KW-0408">Iron</keyword>
<keyword id="KW-0479">Metal-binding</keyword>
<keyword id="KW-0560">Oxidoreductase</keyword>
<keyword id="KW-1185">Reference proteome</keyword>
<keyword id="KW-0847">Vitamin C</keyword>
<accession>Q94LP4</accession>
<accession>A0A5S6RC26</accession>
<accession>Q7G7Q9</accession>
<name>ODD11_ORYSJ</name>